<evidence type="ECO:0000250" key="1"/>
<evidence type="ECO:0000250" key="2">
    <source>
        <dbReference type="UniProtKB" id="P62937"/>
    </source>
</evidence>
<evidence type="ECO:0000255" key="3">
    <source>
        <dbReference type="PROSITE-ProRule" id="PRU00156"/>
    </source>
</evidence>
<evidence type="ECO:0000305" key="4"/>
<evidence type="ECO:0000312" key="5">
    <source>
        <dbReference type="HGNC" id="HGNC:33995"/>
    </source>
</evidence>
<comment type="function">
    <text evidence="1">PPIases accelerate the folding of proteins. It catalyzes the cis-trans isomerization of proline imidic peptide bonds in oligopeptides (By similarity).</text>
</comment>
<comment type="catalytic activity">
    <reaction>
        <text>[protein]-peptidylproline (omega=180) = [protein]-peptidylproline (omega=0)</text>
        <dbReference type="Rhea" id="RHEA:16237"/>
        <dbReference type="Rhea" id="RHEA-COMP:10747"/>
        <dbReference type="Rhea" id="RHEA-COMP:10748"/>
        <dbReference type="ChEBI" id="CHEBI:83833"/>
        <dbReference type="ChEBI" id="CHEBI:83834"/>
        <dbReference type="EC" id="5.2.1.8"/>
    </reaction>
</comment>
<comment type="subcellular location">
    <subcellularLocation>
        <location evidence="2">Cytoplasm</location>
    </subcellularLocation>
</comment>
<comment type="miscellaneous">
    <text evidence="4">It is one of six related genes or pseudogenes found in a cluster, thought to result from gene duplication, on chromosome 1.</text>
</comment>
<comment type="similarity">
    <text evidence="4">Belongs to the cyclophilin-type PPIase family. PPIase A subfamily.</text>
</comment>
<dbReference type="EC" id="5.2.1.8"/>
<dbReference type="EMBL" id="AC242842">
    <property type="status" value="NOT_ANNOTATED_CDS"/>
    <property type="molecule type" value="Genomic_DNA"/>
</dbReference>
<dbReference type="EMBL" id="BC130376">
    <property type="protein sequence ID" value="AAI30377.1"/>
    <property type="molecule type" value="mRNA"/>
</dbReference>
<dbReference type="EMBL" id="BC130378">
    <property type="protein sequence ID" value="AAI30379.1"/>
    <property type="molecule type" value="mRNA"/>
</dbReference>
<dbReference type="CCDS" id="CCDS72898.1"/>
<dbReference type="RefSeq" id="NP_001129261.2">
    <property type="nucleotide sequence ID" value="NM_001135789.5"/>
</dbReference>
<dbReference type="SMR" id="A0A0B4J2A2"/>
<dbReference type="FunCoup" id="A0A0B4J2A2">
    <property type="interactions" value="110"/>
</dbReference>
<dbReference type="IntAct" id="A0A0B4J2A2">
    <property type="interactions" value="6"/>
</dbReference>
<dbReference type="STRING" id="9606.ENSP00000463057"/>
<dbReference type="GlyGen" id="A0A0B4J2A2">
    <property type="glycosylation" value="2 sites, 2 N-linked glycans (2 sites)"/>
</dbReference>
<dbReference type="iPTMnet" id="A0A0B4J2A2"/>
<dbReference type="PhosphoSitePlus" id="A0A0B4J2A2"/>
<dbReference type="BioMuta" id="PPIAL4C"/>
<dbReference type="jPOST" id="A0A0B4J2A2"/>
<dbReference type="MassIVE" id="A0A0B4J2A2"/>
<dbReference type="PaxDb" id="9606-ENSP00000463057"/>
<dbReference type="PeptideAtlas" id="A0A0B4J2A2"/>
<dbReference type="Antibodypedia" id="77049">
    <property type="antibodies" value="9 antibodies from 4 providers"/>
</dbReference>
<dbReference type="DNASU" id="653598"/>
<dbReference type="Ensembl" id="ENST00000585245.3">
    <property type="protein sequence ID" value="ENSP00000463057.2"/>
    <property type="gene ID" value="ENSG00000288867.1"/>
</dbReference>
<dbReference type="GeneID" id="653598"/>
<dbReference type="KEGG" id="hsa:653598"/>
<dbReference type="MANE-Select" id="ENST00000585245.3">
    <property type="protein sequence ID" value="ENSP00000463057.2"/>
    <property type="RefSeq nucleotide sequence ID" value="NM_001135789.5"/>
    <property type="RefSeq protein sequence ID" value="NP_001129261.2"/>
</dbReference>
<dbReference type="AGR" id="HGNC:33995"/>
<dbReference type="CTD" id="653598"/>
<dbReference type="GeneCards" id="PPIAL4C"/>
<dbReference type="HGNC" id="HGNC:33995">
    <property type="gene designation" value="PPIAL4C"/>
</dbReference>
<dbReference type="HPA" id="ENSG00000288867">
    <property type="expression patterns" value="Tissue enhanced (intestine, lymphoid tissue)"/>
</dbReference>
<dbReference type="neXtProt" id="NX_A0A0B4J2A2"/>
<dbReference type="VEuPathDB" id="HostDB:ENSG00000263464"/>
<dbReference type="eggNOG" id="KOG0865">
    <property type="taxonomic scope" value="Eukaryota"/>
</dbReference>
<dbReference type="GeneTree" id="ENSGT00950000183087"/>
<dbReference type="HOGENOM" id="CLU_012062_4_3_1"/>
<dbReference type="InParanoid" id="A0A0B4J2A2"/>
<dbReference type="OMA" id="DFENHNG"/>
<dbReference type="OrthoDB" id="9458476at2759"/>
<dbReference type="PAN-GO" id="A0A0B4J2A2">
    <property type="GO annotations" value="6 GO annotations based on evolutionary models"/>
</dbReference>
<dbReference type="PhylomeDB" id="A0A0B4J2A2"/>
<dbReference type="PathwayCommons" id="A0A0B4J2A2"/>
<dbReference type="SignaLink" id="A0A0B4J2A2"/>
<dbReference type="BioGRID-ORCS" id="653598">
    <property type="hits" value="28 hits in 277 CRISPR screens"/>
</dbReference>
<dbReference type="GenomeRNAi" id="653598"/>
<dbReference type="Pharos" id="A0A0B4J2A2">
    <property type="development level" value="Tdark"/>
</dbReference>
<dbReference type="PRO" id="PR:A0A0B4J2A2"/>
<dbReference type="Proteomes" id="UP000005640">
    <property type="component" value="Chromosome 1"/>
</dbReference>
<dbReference type="RNAct" id="A0A0B4J2A2">
    <property type="molecule type" value="protein"/>
</dbReference>
<dbReference type="Bgee" id="ENSG00000263464">
    <property type="expression patterns" value="Expressed in duodenum and 65 other cell types or tissues"/>
</dbReference>
<dbReference type="GO" id="GO:0005737">
    <property type="term" value="C:cytoplasm"/>
    <property type="evidence" value="ECO:0000318"/>
    <property type="project" value="GO_Central"/>
</dbReference>
<dbReference type="GO" id="GO:0016018">
    <property type="term" value="F:cyclosporin A binding"/>
    <property type="evidence" value="ECO:0000318"/>
    <property type="project" value="GO_Central"/>
</dbReference>
<dbReference type="GO" id="GO:0003755">
    <property type="term" value="F:peptidyl-prolyl cis-trans isomerase activity"/>
    <property type="evidence" value="ECO:0000318"/>
    <property type="project" value="GO_Central"/>
</dbReference>
<dbReference type="GO" id="GO:0006457">
    <property type="term" value="P:protein folding"/>
    <property type="evidence" value="ECO:0000318"/>
    <property type="project" value="GO_Central"/>
</dbReference>
<dbReference type="FunFam" id="2.40.100.10:FF:000011">
    <property type="entry name" value="Peptidyl-prolyl cis-trans isomerase A"/>
    <property type="match status" value="1"/>
</dbReference>
<dbReference type="Gene3D" id="2.40.100.10">
    <property type="entry name" value="Cyclophilin-like"/>
    <property type="match status" value="1"/>
</dbReference>
<dbReference type="InterPro" id="IPR029000">
    <property type="entry name" value="Cyclophilin-like_dom_sf"/>
</dbReference>
<dbReference type="InterPro" id="IPR024936">
    <property type="entry name" value="Cyclophilin-type_PPIase"/>
</dbReference>
<dbReference type="InterPro" id="IPR020892">
    <property type="entry name" value="Cyclophilin-type_PPIase_CS"/>
</dbReference>
<dbReference type="InterPro" id="IPR002130">
    <property type="entry name" value="Cyclophilin-type_PPIase_dom"/>
</dbReference>
<dbReference type="PANTHER" id="PTHR11071">
    <property type="entry name" value="PEPTIDYL-PROLYL CIS-TRANS ISOMERASE"/>
    <property type="match status" value="1"/>
</dbReference>
<dbReference type="PANTHER" id="PTHR11071:SF466">
    <property type="entry name" value="PEPTIDYL-PROLYL CIS-TRANS ISOMERASE A-LIKE 4C-RELATED"/>
    <property type="match status" value="1"/>
</dbReference>
<dbReference type="Pfam" id="PF00160">
    <property type="entry name" value="Pro_isomerase"/>
    <property type="match status" value="1"/>
</dbReference>
<dbReference type="PIRSF" id="PIRSF001467">
    <property type="entry name" value="Peptidylpro_ismrse"/>
    <property type="match status" value="1"/>
</dbReference>
<dbReference type="PRINTS" id="PR00153">
    <property type="entry name" value="CSAPPISMRASE"/>
</dbReference>
<dbReference type="SUPFAM" id="SSF50891">
    <property type="entry name" value="Cyclophilin-like"/>
    <property type="match status" value="1"/>
</dbReference>
<dbReference type="PROSITE" id="PS00170">
    <property type="entry name" value="CSA_PPIASE_1"/>
    <property type="match status" value="1"/>
</dbReference>
<dbReference type="PROSITE" id="PS50072">
    <property type="entry name" value="CSA_PPIASE_2"/>
    <property type="match status" value="1"/>
</dbReference>
<accession>A0A0B4J2A2</accession>
<accession>A1L431</accession>
<accession>A2BFH1</accession>
<gene>
    <name evidence="5" type="primary">PPIAL4C</name>
</gene>
<protein>
    <recommendedName>
        <fullName evidence="4">Peptidyl-prolyl cis-trans isomerase A-like 4C</fullName>
        <shortName>PPIase A-like 4C</shortName>
        <ecNumber>5.2.1.8</ecNumber>
    </recommendedName>
</protein>
<sequence>MVNSVVFFDITVDGKPLGRISIKLFADKIPKTAENFRALSTGEKGFRYKGSCFHRIIPGFMCQGGDFTRPNGTGDKSIYGEKFDDENLIRKHTGSGILSMANAGPNTNGSQFFICTAKTEWLDGKHVAFGKVKERVNIVEAMEHFGYRNSKTSKKITIADCGQF</sequence>
<reference key="1">
    <citation type="journal article" date="2006" name="Nature">
        <title>The DNA sequence and biological annotation of human chromosome 1.</title>
        <authorList>
            <person name="Gregory S.G."/>
            <person name="Barlow K.F."/>
            <person name="McLay K.E."/>
            <person name="Kaul R."/>
            <person name="Swarbreck D."/>
            <person name="Dunham A."/>
            <person name="Scott C.E."/>
            <person name="Howe K.L."/>
            <person name="Woodfine K."/>
            <person name="Spencer C.C.A."/>
            <person name="Jones M.C."/>
            <person name="Gillson C."/>
            <person name="Searle S."/>
            <person name="Zhou Y."/>
            <person name="Kokocinski F."/>
            <person name="McDonald L."/>
            <person name="Evans R."/>
            <person name="Phillips K."/>
            <person name="Atkinson A."/>
            <person name="Cooper R."/>
            <person name="Jones C."/>
            <person name="Hall R.E."/>
            <person name="Andrews T.D."/>
            <person name="Lloyd C."/>
            <person name="Ainscough R."/>
            <person name="Almeida J.P."/>
            <person name="Ambrose K.D."/>
            <person name="Anderson F."/>
            <person name="Andrew R.W."/>
            <person name="Ashwell R.I.S."/>
            <person name="Aubin K."/>
            <person name="Babbage A.K."/>
            <person name="Bagguley C.L."/>
            <person name="Bailey J."/>
            <person name="Beasley H."/>
            <person name="Bethel G."/>
            <person name="Bird C.P."/>
            <person name="Bray-Allen S."/>
            <person name="Brown J.Y."/>
            <person name="Brown A.J."/>
            <person name="Buckley D."/>
            <person name="Burton J."/>
            <person name="Bye J."/>
            <person name="Carder C."/>
            <person name="Chapman J.C."/>
            <person name="Clark S.Y."/>
            <person name="Clarke G."/>
            <person name="Clee C."/>
            <person name="Cobley V."/>
            <person name="Collier R.E."/>
            <person name="Corby N."/>
            <person name="Coville G.J."/>
            <person name="Davies J."/>
            <person name="Deadman R."/>
            <person name="Dunn M."/>
            <person name="Earthrowl M."/>
            <person name="Ellington A.G."/>
            <person name="Errington H."/>
            <person name="Frankish A."/>
            <person name="Frankland J."/>
            <person name="French L."/>
            <person name="Garner P."/>
            <person name="Garnett J."/>
            <person name="Gay L."/>
            <person name="Ghori M.R.J."/>
            <person name="Gibson R."/>
            <person name="Gilby L.M."/>
            <person name="Gillett W."/>
            <person name="Glithero R.J."/>
            <person name="Grafham D.V."/>
            <person name="Griffiths C."/>
            <person name="Griffiths-Jones S."/>
            <person name="Grocock R."/>
            <person name="Hammond S."/>
            <person name="Harrison E.S.I."/>
            <person name="Hart E."/>
            <person name="Haugen E."/>
            <person name="Heath P.D."/>
            <person name="Holmes S."/>
            <person name="Holt K."/>
            <person name="Howden P.J."/>
            <person name="Hunt A.R."/>
            <person name="Hunt S.E."/>
            <person name="Hunter G."/>
            <person name="Isherwood J."/>
            <person name="James R."/>
            <person name="Johnson C."/>
            <person name="Johnson D."/>
            <person name="Joy A."/>
            <person name="Kay M."/>
            <person name="Kershaw J.K."/>
            <person name="Kibukawa M."/>
            <person name="Kimberley A.M."/>
            <person name="King A."/>
            <person name="Knights A.J."/>
            <person name="Lad H."/>
            <person name="Laird G."/>
            <person name="Lawlor S."/>
            <person name="Leongamornlert D.A."/>
            <person name="Lloyd D.M."/>
            <person name="Loveland J."/>
            <person name="Lovell J."/>
            <person name="Lush M.J."/>
            <person name="Lyne R."/>
            <person name="Martin S."/>
            <person name="Mashreghi-Mohammadi M."/>
            <person name="Matthews L."/>
            <person name="Matthews N.S.W."/>
            <person name="McLaren S."/>
            <person name="Milne S."/>
            <person name="Mistry S."/>
            <person name="Moore M.J.F."/>
            <person name="Nickerson T."/>
            <person name="O'Dell C.N."/>
            <person name="Oliver K."/>
            <person name="Palmeiri A."/>
            <person name="Palmer S.A."/>
            <person name="Parker A."/>
            <person name="Patel D."/>
            <person name="Pearce A.V."/>
            <person name="Peck A.I."/>
            <person name="Pelan S."/>
            <person name="Phelps K."/>
            <person name="Phillimore B.J."/>
            <person name="Plumb R."/>
            <person name="Rajan J."/>
            <person name="Raymond C."/>
            <person name="Rouse G."/>
            <person name="Saenphimmachak C."/>
            <person name="Sehra H.K."/>
            <person name="Sheridan E."/>
            <person name="Shownkeen R."/>
            <person name="Sims S."/>
            <person name="Skuce C.D."/>
            <person name="Smith M."/>
            <person name="Steward C."/>
            <person name="Subramanian S."/>
            <person name="Sycamore N."/>
            <person name="Tracey A."/>
            <person name="Tromans A."/>
            <person name="Van Helmond Z."/>
            <person name="Wall M."/>
            <person name="Wallis J.M."/>
            <person name="White S."/>
            <person name="Whitehead S.L."/>
            <person name="Wilkinson J.E."/>
            <person name="Willey D.L."/>
            <person name="Williams H."/>
            <person name="Wilming L."/>
            <person name="Wray P.W."/>
            <person name="Wu Z."/>
            <person name="Coulson A."/>
            <person name="Vaudin M."/>
            <person name="Sulston J.E."/>
            <person name="Durbin R.M."/>
            <person name="Hubbard T."/>
            <person name="Wooster R."/>
            <person name="Dunham I."/>
            <person name="Carter N.P."/>
            <person name="McVean G."/>
            <person name="Ross M.T."/>
            <person name="Harrow J."/>
            <person name="Olson M.V."/>
            <person name="Beck S."/>
            <person name="Rogers J."/>
            <person name="Bentley D.R."/>
        </authorList>
    </citation>
    <scope>NUCLEOTIDE SEQUENCE [LARGE SCALE GENOMIC DNA]</scope>
</reference>
<reference key="2">
    <citation type="journal article" date="2004" name="Genome Res.">
        <title>The status, quality, and expansion of the NIH full-length cDNA project: the Mammalian Gene Collection (MGC).</title>
        <authorList>
            <consortium name="The MGC Project Team"/>
        </authorList>
    </citation>
    <scope>NUCLEOTIDE SEQUENCE [LARGE SCALE MRNA]</scope>
</reference>
<organism>
    <name type="scientific">Homo sapiens</name>
    <name type="common">Human</name>
    <dbReference type="NCBI Taxonomy" id="9606"/>
    <lineage>
        <taxon>Eukaryota</taxon>
        <taxon>Metazoa</taxon>
        <taxon>Chordata</taxon>
        <taxon>Craniata</taxon>
        <taxon>Vertebrata</taxon>
        <taxon>Euteleostomi</taxon>
        <taxon>Mammalia</taxon>
        <taxon>Eutheria</taxon>
        <taxon>Euarchontoglires</taxon>
        <taxon>Primates</taxon>
        <taxon>Haplorrhini</taxon>
        <taxon>Catarrhini</taxon>
        <taxon>Hominidae</taxon>
        <taxon>Homo</taxon>
    </lineage>
</organism>
<name>PAL4C_HUMAN</name>
<feature type="chain" id="PRO_0000433924" description="Peptidyl-prolyl cis-trans isomerase A-like 4C">
    <location>
        <begin position="1"/>
        <end position="164"/>
    </location>
</feature>
<feature type="domain" description="PPIase cyclophilin-type" evidence="3">
    <location>
        <begin position="7"/>
        <end position="163"/>
    </location>
</feature>
<proteinExistence type="evidence at transcript level"/>
<keyword id="KW-0963">Cytoplasm</keyword>
<keyword id="KW-0413">Isomerase</keyword>
<keyword id="KW-1185">Reference proteome</keyword>
<keyword id="KW-0697">Rotamase</keyword>